<evidence type="ECO:0000255" key="1">
    <source>
        <dbReference type="PROSITE-ProRule" id="PRU01346"/>
    </source>
</evidence>
<gene>
    <name type="ORF">DDB_G0291015</name>
</gene>
<feature type="chain" id="PRO_0000389018" description="Putative uncharacterized protein DDB_G0291015">
    <location>
        <begin position="1"/>
        <end position="137"/>
    </location>
</feature>
<feature type="domain" description="Sm" evidence="1">
    <location>
        <begin position="30"/>
        <end position="105"/>
    </location>
</feature>
<accession>Q54F84</accession>
<name>Y1015_DICDI</name>
<reference key="1">
    <citation type="journal article" date="2005" name="Nature">
        <title>The genome of the social amoeba Dictyostelium discoideum.</title>
        <authorList>
            <person name="Eichinger L."/>
            <person name="Pachebat J.A."/>
            <person name="Gloeckner G."/>
            <person name="Rajandream M.A."/>
            <person name="Sucgang R."/>
            <person name="Berriman M."/>
            <person name="Song J."/>
            <person name="Olsen R."/>
            <person name="Szafranski K."/>
            <person name="Xu Q."/>
            <person name="Tunggal B."/>
            <person name="Kummerfeld S."/>
            <person name="Madera M."/>
            <person name="Konfortov B.A."/>
            <person name="Rivero F."/>
            <person name="Bankier A.T."/>
            <person name="Lehmann R."/>
            <person name="Hamlin N."/>
            <person name="Davies R."/>
            <person name="Gaudet P."/>
            <person name="Fey P."/>
            <person name="Pilcher K."/>
            <person name="Chen G."/>
            <person name="Saunders D."/>
            <person name="Sodergren E.J."/>
            <person name="Davis P."/>
            <person name="Kerhornou A."/>
            <person name="Nie X."/>
            <person name="Hall N."/>
            <person name="Anjard C."/>
            <person name="Hemphill L."/>
            <person name="Bason N."/>
            <person name="Farbrother P."/>
            <person name="Desany B."/>
            <person name="Just E."/>
            <person name="Morio T."/>
            <person name="Rost R."/>
            <person name="Churcher C.M."/>
            <person name="Cooper J."/>
            <person name="Haydock S."/>
            <person name="van Driessche N."/>
            <person name="Cronin A."/>
            <person name="Goodhead I."/>
            <person name="Muzny D.M."/>
            <person name="Mourier T."/>
            <person name="Pain A."/>
            <person name="Lu M."/>
            <person name="Harper D."/>
            <person name="Lindsay R."/>
            <person name="Hauser H."/>
            <person name="James K.D."/>
            <person name="Quiles M."/>
            <person name="Madan Babu M."/>
            <person name="Saito T."/>
            <person name="Buchrieser C."/>
            <person name="Wardroper A."/>
            <person name="Felder M."/>
            <person name="Thangavelu M."/>
            <person name="Johnson D."/>
            <person name="Knights A."/>
            <person name="Loulseged H."/>
            <person name="Mungall K.L."/>
            <person name="Oliver K."/>
            <person name="Price C."/>
            <person name="Quail M.A."/>
            <person name="Urushihara H."/>
            <person name="Hernandez J."/>
            <person name="Rabbinowitsch E."/>
            <person name="Steffen D."/>
            <person name="Sanders M."/>
            <person name="Ma J."/>
            <person name="Kohara Y."/>
            <person name="Sharp S."/>
            <person name="Simmonds M.N."/>
            <person name="Spiegler S."/>
            <person name="Tivey A."/>
            <person name="Sugano S."/>
            <person name="White B."/>
            <person name="Walker D."/>
            <person name="Woodward J.R."/>
            <person name="Winckler T."/>
            <person name="Tanaka Y."/>
            <person name="Shaulsky G."/>
            <person name="Schleicher M."/>
            <person name="Weinstock G.M."/>
            <person name="Rosenthal A."/>
            <person name="Cox E.C."/>
            <person name="Chisholm R.L."/>
            <person name="Gibbs R.A."/>
            <person name="Loomis W.F."/>
            <person name="Platzer M."/>
            <person name="Kay R.R."/>
            <person name="Williams J.G."/>
            <person name="Dear P.H."/>
            <person name="Noegel A.A."/>
            <person name="Barrell B.G."/>
            <person name="Kuspa A."/>
        </authorList>
    </citation>
    <scope>NUCLEOTIDE SEQUENCE [LARGE SCALE GENOMIC DNA]</scope>
    <source>
        <strain>AX4</strain>
    </source>
</reference>
<organism>
    <name type="scientific">Dictyostelium discoideum</name>
    <name type="common">Social amoeba</name>
    <dbReference type="NCBI Taxonomy" id="44689"/>
    <lineage>
        <taxon>Eukaryota</taxon>
        <taxon>Amoebozoa</taxon>
        <taxon>Evosea</taxon>
        <taxon>Eumycetozoa</taxon>
        <taxon>Dictyostelia</taxon>
        <taxon>Dictyosteliales</taxon>
        <taxon>Dictyosteliaceae</taxon>
        <taxon>Dictyostelium</taxon>
    </lineage>
</organism>
<sequence>MSITYKKDEKDLKNNTNNSKKKFIAKEFQSLLCVFTALRGTQITIQLRSNCEIYGTITNVDAYLNIELSDAKLTNTRYKNKRDEHVQEILIQSRNIRFIQIPDKIDLNSLLYLYSKQLSQSKKKYERTLRKPPPPTK</sequence>
<protein>
    <recommendedName>
        <fullName>Putative uncharacterized protein DDB_G0291015</fullName>
    </recommendedName>
</protein>
<dbReference type="EMBL" id="AAFI02000174">
    <property type="protein sequence ID" value="EAL61938.1"/>
    <property type="molecule type" value="Genomic_DNA"/>
</dbReference>
<dbReference type="RefSeq" id="XP_635453.1">
    <property type="nucleotide sequence ID" value="XM_630361.1"/>
</dbReference>
<dbReference type="SMR" id="Q54F84"/>
<dbReference type="FunCoup" id="Q54F84">
    <property type="interactions" value="1"/>
</dbReference>
<dbReference type="STRING" id="44689.Q54F84"/>
<dbReference type="PaxDb" id="44689-DDB0233401"/>
<dbReference type="EnsemblProtists" id="EAL61938">
    <property type="protein sequence ID" value="EAL61938"/>
    <property type="gene ID" value="DDB_G0291015"/>
</dbReference>
<dbReference type="GeneID" id="8627953"/>
<dbReference type="KEGG" id="ddi:DDB_G0291015"/>
<dbReference type="dictyBase" id="DDB_G0291015"/>
<dbReference type="VEuPathDB" id="AmoebaDB:DDB_G0291015"/>
<dbReference type="eggNOG" id="KOG3428">
    <property type="taxonomic scope" value="Eukaryota"/>
</dbReference>
<dbReference type="HOGENOM" id="CLU_141832_0_1_1"/>
<dbReference type="InParanoid" id="Q54F84"/>
<dbReference type="OMA" id="RNIRYIQ"/>
<dbReference type="PhylomeDB" id="Q54F84"/>
<dbReference type="Reactome" id="R-DDI-111367">
    <property type="pathway name" value="SLBP independent Processing of Histone Pre-mRNAs"/>
</dbReference>
<dbReference type="Reactome" id="R-DDI-73856">
    <property type="pathway name" value="RNA Polymerase II Transcription Termination"/>
</dbReference>
<dbReference type="Reactome" id="R-DDI-77588">
    <property type="pathway name" value="SLBP Dependent Processing of Replication-Dependent Histone Pre-mRNAs"/>
</dbReference>
<dbReference type="PRO" id="PR:Q54F84"/>
<dbReference type="Proteomes" id="UP000002195">
    <property type="component" value="Chromosome 5"/>
</dbReference>
<dbReference type="GO" id="GO:0071254">
    <property type="term" value="C:cytoplasmic U snRNP body"/>
    <property type="evidence" value="ECO:0000318"/>
    <property type="project" value="GO_Central"/>
</dbReference>
<dbReference type="GO" id="GO:0016604">
    <property type="term" value="C:nuclear body"/>
    <property type="evidence" value="ECO:0000318"/>
    <property type="project" value="GO_Central"/>
</dbReference>
<dbReference type="GO" id="GO:0071208">
    <property type="term" value="F:histone pre-mRNA DCP binding"/>
    <property type="evidence" value="ECO:0000318"/>
    <property type="project" value="GO_Central"/>
</dbReference>
<dbReference type="GO" id="GO:0071209">
    <property type="term" value="F:U7 snRNA binding"/>
    <property type="evidence" value="ECO:0000318"/>
    <property type="project" value="GO_Central"/>
</dbReference>
<dbReference type="GO" id="GO:0006398">
    <property type="term" value="P:mRNA 3'-end processing by stem-loop binding and cleavage"/>
    <property type="evidence" value="ECO:0000318"/>
    <property type="project" value="GO_Central"/>
</dbReference>
<dbReference type="CDD" id="cd01733">
    <property type="entry name" value="LSm10"/>
    <property type="match status" value="1"/>
</dbReference>
<dbReference type="Gene3D" id="2.30.30.100">
    <property type="match status" value="1"/>
</dbReference>
<dbReference type="InterPro" id="IPR010920">
    <property type="entry name" value="LSM_dom_sf"/>
</dbReference>
<dbReference type="InterPro" id="IPR047575">
    <property type="entry name" value="Sm"/>
</dbReference>
<dbReference type="InterPro" id="IPR001163">
    <property type="entry name" value="Sm_dom_euk/arc"/>
</dbReference>
<dbReference type="InterPro" id="IPR052840">
    <property type="entry name" value="U7_snRNA_Sm-like"/>
</dbReference>
<dbReference type="PANTHER" id="PTHR21196">
    <property type="entry name" value="U7 SNRNA-ASSOCIATED SM-LIKE PROTEIN LSM10"/>
    <property type="match status" value="1"/>
</dbReference>
<dbReference type="PANTHER" id="PTHR21196:SF1">
    <property type="entry name" value="U7 SNRNA-ASSOCIATED SM-LIKE PROTEIN LSM10"/>
    <property type="match status" value="1"/>
</dbReference>
<dbReference type="Pfam" id="PF01423">
    <property type="entry name" value="LSM"/>
    <property type="match status" value="1"/>
</dbReference>
<dbReference type="SMART" id="SM00651">
    <property type="entry name" value="Sm"/>
    <property type="match status" value="1"/>
</dbReference>
<dbReference type="SUPFAM" id="SSF50182">
    <property type="entry name" value="Sm-like ribonucleoproteins"/>
    <property type="match status" value="1"/>
</dbReference>
<dbReference type="PROSITE" id="PS52002">
    <property type="entry name" value="SM"/>
    <property type="match status" value="1"/>
</dbReference>
<keyword id="KW-1185">Reference proteome</keyword>
<proteinExistence type="predicted"/>